<proteinExistence type="inferred from homology"/>
<keyword id="KW-0997">Cell inner membrane</keyword>
<keyword id="KW-1003">Cell membrane</keyword>
<keyword id="KW-0444">Lipid biosynthesis</keyword>
<keyword id="KW-0443">Lipid metabolism</keyword>
<keyword id="KW-0472">Membrane</keyword>
<keyword id="KW-0594">Phospholipid biosynthesis</keyword>
<keyword id="KW-1208">Phospholipid metabolism</keyword>
<keyword id="KW-0677">Repeat</keyword>
<keyword id="KW-0808">Transferase</keyword>
<keyword id="KW-0812">Transmembrane</keyword>
<keyword id="KW-1133">Transmembrane helix</keyword>
<feature type="chain" id="PRO_1000098917" description="Cardiolipin synthase A">
    <location>
        <begin position="1"/>
        <end position="486"/>
    </location>
</feature>
<feature type="transmembrane region" description="Helical" evidence="1">
    <location>
        <begin position="3"/>
        <end position="23"/>
    </location>
</feature>
<feature type="transmembrane region" description="Helical" evidence="1">
    <location>
        <begin position="38"/>
        <end position="58"/>
    </location>
</feature>
<feature type="domain" description="PLD phosphodiesterase 1" evidence="1">
    <location>
        <begin position="219"/>
        <end position="246"/>
    </location>
</feature>
<feature type="domain" description="PLD phosphodiesterase 2" evidence="1">
    <location>
        <begin position="399"/>
        <end position="426"/>
    </location>
</feature>
<feature type="active site" evidence="1">
    <location>
        <position position="224"/>
    </location>
</feature>
<feature type="active site" evidence="1">
    <location>
        <position position="226"/>
    </location>
</feature>
<feature type="active site" evidence="1">
    <location>
        <position position="231"/>
    </location>
</feature>
<feature type="active site" evidence="1">
    <location>
        <position position="404"/>
    </location>
</feature>
<feature type="active site" evidence="1">
    <location>
        <position position="406"/>
    </location>
</feature>
<feature type="active site" evidence="1">
    <location>
        <position position="411"/>
    </location>
</feature>
<comment type="function">
    <text evidence="1">Catalyzes the reversible phosphatidyl group transfer from one phosphatidylglycerol molecule to another to form cardiolipin (CL) (diphosphatidylglycerol) and glycerol.</text>
</comment>
<comment type="catalytic activity">
    <reaction evidence="1">
        <text>2 a 1,2-diacyl-sn-glycero-3-phospho-(1'-sn-glycerol) = a cardiolipin + glycerol</text>
        <dbReference type="Rhea" id="RHEA:31451"/>
        <dbReference type="ChEBI" id="CHEBI:17754"/>
        <dbReference type="ChEBI" id="CHEBI:62237"/>
        <dbReference type="ChEBI" id="CHEBI:64716"/>
    </reaction>
</comment>
<comment type="subcellular location">
    <subcellularLocation>
        <location evidence="1">Cell inner membrane</location>
        <topology evidence="1">Multi-pass membrane protein</topology>
    </subcellularLocation>
</comment>
<comment type="similarity">
    <text evidence="1">Belongs to the phospholipase D family. Cardiolipin synthase subfamily. ClsA sub-subfamily.</text>
</comment>
<organism>
    <name type="scientific">Salmonella paratyphi A (strain AKU_12601)</name>
    <dbReference type="NCBI Taxonomy" id="554290"/>
    <lineage>
        <taxon>Bacteria</taxon>
        <taxon>Pseudomonadati</taxon>
        <taxon>Pseudomonadota</taxon>
        <taxon>Gammaproteobacteria</taxon>
        <taxon>Enterobacterales</taxon>
        <taxon>Enterobacteriaceae</taxon>
        <taxon>Salmonella</taxon>
    </lineage>
</organism>
<reference key="1">
    <citation type="journal article" date="2009" name="BMC Genomics">
        <title>Pseudogene accumulation in the evolutionary histories of Salmonella enterica serovars Paratyphi A and Typhi.</title>
        <authorList>
            <person name="Holt K.E."/>
            <person name="Thomson N.R."/>
            <person name="Wain J."/>
            <person name="Langridge G.C."/>
            <person name="Hasan R."/>
            <person name="Bhutta Z.A."/>
            <person name="Quail M.A."/>
            <person name="Norbertczak H."/>
            <person name="Walker D."/>
            <person name="Simmonds M."/>
            <person name="White B."/>
            <person name="Bason N."/>
            <person name="Mungall K."/>
            <person name="Dougan G."/>
            <person name="Parkhill J."/>
        </authorList>
    </citation>
    <scope>NUCLEOTIDE SEQUENCE [LARGE SCALE GENOMIC DNA]</scope>
    <source>
        <strain>AKU_12601</strain>
    </source>
</reference>
<gene>
    <name evidence="1" type="primary">clsA</name>
    <name type="synonym">cls</name>
    <name type="ordered locus">SSPA1057</name>
</gene>
<evidence type="ECO:0000255" key="1">
    <source>
        <dbReference type="HAMAP-Rule" id="MF_00190"/>
    </source>
</evidence>
<protein>
    <recommendedName>
        <fullName evidence="1">Cardiolipin synthase A</fullName>
        <shortName evidence="1">CL synthase</shortName>
        <ecNumber evidence="1">2.7.8.-</ecNumber>
    </recommendedName>
</protein>
<accession>B5BIA8</accession>
<name>CLSA_SALPK</name>
<dbReference type="EC" id="2.7.8.-" evidence="1"/>
<dbReference type="EMBL" id="FM200053">
    <property type="protein sequence ID" value="CAR59211.1"/>
    <property type="molecule type" value="Genomic_DNA"/>
</dbReference>
<dbReference type="RefSeq" id="WP_000206883.1">
    <property type="nucleotide sequence ID" value="NC_011147.1"/>
</dbReference>
<dbReference type="SMR" id="B5BIA8"/>
<dbReference type="KEGG" id="sek:SSPA1057"/>
<dbReference type="HOGENOM" id="CLU_038053_1_0_6"/>
<dbReference type="Proteomes" id="UP000001869">
    <property type="component" value="Chromosome"/>
</dbReference>
<dbReference type="GO" id="GO:0005886">
    <property type="term" value="C:plasma membrane"/>
    <property type="evidence" value="ECO:0007669"/>
    <property type="project" value="UniProtKB-SubCell"/>
</dbReference>
<dbReference type="GO" id="GO:0008808">
    <property type="term" value="F:cardiolipin synthase activity"/>
    <property type="evidence" value="ECO:0007669"/>
    <property type="project" value="InterPro"/>
</dbReference>
<dbReference type="GO" id="GO:0032049">
    <property type="term" value="P:cardiolipin biosynthetic process"/>
    <property type="evidence" value="ECO:0007669"/>
    <property type="project" value="InterPro"/>
</dbReference>
<dbReference type="CDD" id="cd09152">
    <property type="entry name" value="PLDc_EcCLS_like_1"/>
    <property type="match status" value="1"/>
</dbReference>
<dbReference type="CDD" id="cd09158">
    <property type="entry name" value="PLDc_EcCLS_like_2"/>
    <property type="match status" value="1"/>
</dbReference>
<dbReference type="FunFam" id="3.30.870.10:FF:000002">
    <property type="entry name" value="Cardiolipin synthase A"/>
    <property type="match status" value="1"/>
</dbReference>
<dbReference type="FunFam" id="3.30.870.10:FF:000003">
    <property type="entry name" value="Cardiolipin synthase A"/>
    <property type="match status" value="1"/>
</dbReference>
<dbReference type="Gene3D" id="3.30.870.10">
    <property type="entry name" value="Endonuclease Chain A"/>
    <property type="match status" value="2"/>
</dbReference>
<dbReference type="HAMAP" id="MF_00190">
    <property type="entry name" value="Cardiolipin_synth_ClsA"/>
    <property type="match status" value="1"/>
</dbReference>
<dbReference type="InterPro" id="IPR022924">
    <property type="entry name" value="Cardiolipin_synthase"/>
</dbReference>
<dbReference type="InterPro" id="IPR030840">
    <property type="entry name" value="CL_synthase_A"/>
</dbReference>
<dbReference type="InterPro" id="IPR027379">
    <property type="entry name" value="CLS_N"/>
</dbReference>
<dbReference type="InterPro" id="IPR025202">
    <property type="entry name" value="PLD-like_dom"/>
</dbReference>
<dbReference type="InterPro" id="IPR001736">
    <property type="entry name" value="PLipase_D/transphosphatidylase"/>
</dbReference>
<dbReference type="NCBIfam" id="TIGR04265">
    <property type="entry name" value="bac_cardiolipin"/>
    <property type="match status" value="1"/>
</dbReference>
<dbReference type="PANTHER" id="PTHR21248">
    <property type="entry name" value="CARDIOLIPIN SYNTHASE"/>
    <property type="match status" value="1"/>
</dbReference>
<dbReference type="PANTHER" id="PTHR21248:SF22">
    <property type="entry name" value="PHOSPHOLIPASE D"/>
    <property type="match status" value="1"/>
</dbReference>
<dbReference type="Pfam" id="PF13091">
    <property type="entry name" value="PLDc_2"/>
    <property type="match status" value="2"/>
</dbReference>
<dbReference type="Pfam" id="PF13396">
    <property type="entry name" value="PLDc_N"/>
    <property type="match status" value="1"/>
</dbReference>
<dbReference type="SMART" id="SM00155">
    <property type="entry name" value="PLDc"/>
    <property type="match status" value="2"/>
</dbReference>
<dbReference type="SUPFAM" id="SSF56024">
    <property type="entry name" value="Phospholipase D/nuclease"/>
    <property type="match status" value="2"/>
</dbReference>
<dbReference type="PROSITE" id="PS50035">
    <property type="entry name" value="PLD"/>
    <property type="match status" value="2"/>
</dbReference>
<sequence length="486" mass="54792">MTTFYTVVSWLVILGYWVLIAGVTLRILMKRRAVPSAMAWLLIIYILPLVGIIAYLSVGELHLGKRRAERARAMWPSTAKWLNDLKACKHIFAQENSSVASSLFKLCERRQGIAGVKGNQLQLLTDSDDVMQALIRDIQLARHNIEMVFYIWQPGGMADQVAESLMAAARRDIHCRLMLDSAGSVAFFRSPWAAMMRNAGIEVVEALKVNLMRVFLRRMDLRQHRKMVMIDNYIAYTGSMNMVDPRFFKQDAGVGQWVDLMARMEGPVATAMGIVYSCDWEIETGKRILPPPPDVNIMPFEQASGHTIHTIASGPGFPEDLIHQALLTATYAAREYLIMTTPYFVPSDDLLHAICTAAQRGVDVSIILPRKNDSLLVGWASRAFFSELLAAGVKIYQFEGGLLHTKSVLVDGELSLVGTVNLDMRSLWLNFEITLVIDDTGFGADLAAVQDDYISRSRLLDARLWVKRPLWQRITERLFYFFSPLL</sequence>